<dbReference type="EMBL" id="CP000266">
    <property type="protein sequence ID" value="ABF04908.1"/>
    <property type="molecule type" value="Genomic_DNA"/>
</dbReference>
<dbReference type="RefSeq" id="WP_000080947.1">
    <property type="nucleotide sequence ID" value="NC_008258.1"/>
</dbReference>
<dbReference type="SMR" id="Q0T1A7"/>
<dbReference type="GeneID" id="75172757"/>
<dbReference type="KEGG" id="sfv:SFV_2829"/>
<dbReference type="HOGENOM" id="CLU_114845_0_0_6"/>
<dbReference type="Proteomes" id="UP000000659">
    <property type="component" value="Chromosome"/>
</dbReference>
<dbReference type="GO" id="GO:0010181">
    <property type="term" value="F:FMN binding"/>
    <property type="evidence" value="ECO:0007669"/>
    <property type="project" value="InterPro"/>
</dbReference>
<dbReference type="GO" id="GO:0036211">
    <property type="term" value="P:protein modification process"/>
    <property type="evidence" value="ECO:0007669"/>
    <property type="project" value="InterPro"/>
</dbReference>
<dbReference type="FunFam" id="3.40.50.360:FF:000005">
    <property type="entry name" value="Protein NrdI"/>
    <property type="match status" value="1"/>
</dbReference>
<dbReference type="Gene3D" id="3.40.50.360">
    <property type="match status" value="1"/>
</dbReference>
<dbReference type="HAMAP" id="MF_00128">
    <property type="entry name" value="NrdI"/>
    <property type="match status" value="1"/>
</dbReference>
<dbReference type="InterPro" id="IPR029039">
    <property type="entry name" value="Flavoprotein-like_sf"/>
</dbReference>
<dbReference type="InterPro" id="IPR020852">
    <property type="entry name" value="RNR_Ib_NrdI_bac"/>
</dbReference>
<dbReference type="InterPro" id="IPR004465">
    <property type="entry name" value="RNR_NrdI"/>
</dbReference>
<dbReference type="NCBIfam" id="TIGR00333">
    <property type="entry name" value="nrdI"/>
    <property type="match status" value="1"/>
</dbReference>
<dbReference type="PANTHER" id="PTHR37297">
    <property type="entry name" value="PROTEIN NRDI"/>
    <property type="match status" value="1"/>
</dbReference>
<dbReference type="PANTHER" id="PTHR37297:SF1">
    <property type="entry name" value="PROTEIN NRDI"/>
    <property type="match status" value="1"/>
</dbReference>
<dbReference type="Pfam" id="PF07972">
    <property type="entry name" value="Flavodoxin_NdrI"/>
    <property type="match status" value="1"/>
</dbReference>
<dbReference type="PIRSF" id="PIRSF005087">
    <property type="entry name" value="NrdI"/>
    <property type="match status" value="1"/>
</dbReference>
<dbReference type="SUPFAM" id="SSF52218">
    <property type="entry name" value="Flavoproteins"/>
    <property type="match status" value="1"/>
</dbReference>
<comment type="function">
    <text evidence="1">Probably involved in ribonucleotide reductase function.</text>
</comment>
<comment type="similarity">
    <text evidence="1">Belongs to the NrdI family.</text>
</comment>
<sequence>MSQLVYFSSSSENTQRFIERLGLPAVRIPLNERERIQVDEPYILIVPSYGGGGTAGAVPRQVIRFLNDEHNRALLRGVIASGNRNFGEAYGRAGDVIARKCGVPWLYRFELMGTQSDIENVRKGVTEFWQRQPQNA</sequence>
<organism>
    <name type="scientific">Shigella flexneri serotype 5b (strain 8401)</name>
    <dbReference type="NCBI Taxonomy" id="373384"/>
    <lineage>
        <taxon>Bacteria</taxon>
        <taxon>Pseudomonadati</taxon>
        <taxon>Pseudomonadota</taxon>
        <taxon>Gammaproteobacteria</taxon>
        <taxon>Enterobacterales</taxon>
        <taxon>Enterobacteriaceae</taxon>
        <taxon>Shigella</taxon>
    </lineage>
</organism>
<gene>
    <name evidence="1" type="primary">nrdI</name>
    <name type="ordered locus">SFV_2829</name>
</gene>
<feature type="chain" id="PRO_1000016523" description="Protein NrdI">
    <location>
        <begin position="1"/>
        <end position="136"/>
    </location>
</feature>
<protein>
    <recommendedName>
        <fullName evidence="1">Protein NrdI</fullName>
    </recommendedName>
</protein>
<reference key="1">
    <citation type="journal article" date="2006" name="BMC Genomics">
        <title>Complete genome sequence of Shigella flexneri 5b and comparison with Shigella flexneri 2a.</title>
        <authorList>
            <person name="Nie H."/>
            <person name="Yang F."/>
            <person name="Zhang X."/>
            <person name="Yang J."/>
            <person name="Chen L."/>
            <person name="Wang J."/>
            <person name="Xiong Z."/>
            <person name="Peng J."/>
            <person name="Sun L."/>
            <person name="Dong J."/>
            <person name="Xue Y."/>
            <person name="Xu X."/>
            <person name="Chen S."/>
            <person name="Yao Z."/>
            <person name="Shen Y."/>
            <person name="Jin Q."/>
        </authorList>
    </citation>
    <scope>NUCLEOTIDE SEQUENCE [LARGE SCALE GENOMIC DNA]</scope>
    <source>
        <strain>8401</strain>
    </source>
</reference>
<name>NRDI_SHIF8</name>
<accession>Q0T1A7</accession>
<proteinExistence type="inferred from homology"/>
<evidence type="ECO:0000255" key="1">
    <source>
        <dbReference type="HAMAP-Rule" id="MF_00128"/>
    </source>
</evidence>